<gene>
    <name evidence="1" type="primary">petG</name>
    <name type="ordered locus">SYNPCC7002_A0374</name>
</gene>
<protein>
    <recommendedName>
        <fullName evidence="1">Cytochrome b6-f complex subunit 5</fullName>
    </recommendedName>
    <alternativeName>
        <fullName evidence="1">Cytochrome b6-f complex subunit PetG</fullName>
    </alternativeName>
    <alternativeName>
        <fullName evidence="1">Cytochrome b6-f complex subunit V</fullName>
    </alternativeName>
</protein>
<evidence type="ECO:0000255" key="1">
    <source>
        <dbReference type="HAMAP-Rule" id="MF_00432"/>
    </source>
</evidence>
<keyword id="KW-0249">Electron transport</keyword>
<keyword id="KW-0472">Membrane</keyword>
<keyword id="KW-0602">Photosynthesis</keyword>
<keyword id="KW-1185">Reference proteome</keyword>
<keyword id="KW-0793">Thylakoid</keyword>
<keyword id="KW-0812">Transmembrane</keyword>
<keyword id="KW-1133">Transmembrane helix</keyword>
<keyword id="KW-0813">Transport</keyword>
<name>PETG_PICP2</name>
<proteinExistence type="inferred from homology"/>
<organism>
    <name type="scientific">Picosynechococcus sp. (strain ATCC 27264 / PCC 7002 / PR-6)</name>
    <name type="common">Agmenellum quadruplicatum</name>
    <dbReference type="NCBI Taxonomy" id="32049"/>
    <lineage>
        <taxon>Bacteria</taxon>
        <taxon>Bacillati</taxon>
        <taxon>Cyanobacteriota</taxon>
        <taxon>Cyanophyceae</taxon>
        <taxon>Oscillatoriophycideae</taxon>
        <taxon>Chroococcales</taxon>
        <taxon>Geminocystaceae</taxon>
        <taxon>Picosynechococcus</taxon>
    </lineage>
</organism>
<comment type="function">
    <text evidence="1">Component of the cytochrome b6-f complex, which mediates electron transfer between photosystem II (PSII) and photosystem I (PSI), cyclic electron flow around PSI, and state transitions. PetG is required for either the stability or assembly of the cytochrome b6-f complex.</text>
</comment>
<comment type="subunit">
    <text evidence="1">The 4 large subunits of the cytochrome b6-f complex are cytochrome b6, subunit IV (17 kDa polypeptide, PetD), cytochrome f and the Rieske protein, while the 4 small subunits are PetG, PetL, PetM and PetN. The complex functions as a dimer.</text>
</comment>
<comment type="subcellular location">
    <subcellularLocation>
        <location evidence="1">Cellular thylakoid membrane</location>
        <topology evidence="1">Single-pass membrane protein</topology>
    </subcellularLocation>
</comment>
<comment type="similarity">
    <text evidence="1">Belongs to the PetG family.</text>
</comment>
<feature type="chain" id="PRO_1000192786" description="Cytochrome b6-f complex subunit 5">
    <location>
        <begin position="1"/>
        <end position="38"/>
    </location>
</feature>
<feature type="transmembrane region" description="Helical" evidence="1">
    <location>
        <begin position="5"/>
        <end position="25"/>
    </location>
</feature>
<sequence length="38" mass="4103">MIEPLLLGIVLGLIPVTLAGLFVAAYLQYKRGNDLGME</sequence>
<dbReference type="EMBL" id="CP000951">
    <property type="protein sequence ID" value="ACA98384.1"/>
    <property type="molecule type" value="Genomic_DNA"/>
</dbReference>
<dbReference type="RefSeq" id="WP_012306008.1">
    <property type="nucleotide sequence ID" value="NZ_JAHHPU010000004.1"/>
</dbReference>
<dbReference type="SMR" id="B1XNK6"/>
<dbReference type="STRING" id="32049.SYNPCC7002_A0374"/>
<dbReference type="KEGG" id="syp:SYNPCC7002_A0374"/>
<dbReference type="eggNOG" id="ENOG5033BE9">
    <property type="taxonomic scope" value="Bacteria"/>
</dbReference>
<dbReference type="HOGENOM" id="CLU_216962_0_0_3"/>
<dbReference type="Proteomes" id="UP000001688">
    <property type="component" value="Chromosome"/>
</dbReference>
<dbReference type="GO" id="GO:0009512">
    <property type="term" value="C:cytochrome b6f complex"/>
    <property type="evidence" value="ECO:0007669"/>
    <property type="project" value="InterPro"/>
</dbReference>
<dbReference type="GO" id="GO:0031676">
    <property type="term" value="C:plasma membrane-derived thylakoid membrane"/>
    <property type="evidence" value="ECO:0007669"/>
    <property type="project" value="UniProtKB-SubCell"/>
</dbReference>
<dbReference type="GO" id="GO:0045158">
    <property type="term" value="F:electron transporter, transferring electrons within cytochrome b6/f complex of photosystem II activity"/>
    <property type="evidence" value="ECO:0007669"/>
    <property type="project" value="UniProtKB-UniRule"/>
</dbReference>
<dbReference type="GO" id="GO:0017004">
    <property type="term" value="P:cytochrome complex assembly"/>
    <property type="evidence" value="ECO:0007669"/>
    <property type="project" value="UniProtKB-UniRule"/>
</dbReference>
<dbReference type="GO" id="GO:0015979">
    <property type="term" value="P:photosynthesis"/>
    <property type="evidence" value="ECO:0007669"/>
    <property type="project" value="UniProtKB-KW"/>
</dbReference>
<dbReference type="HAMAP" id="MF_00432">
    <property type="entry name" value="Cytb6_f_PetG"/>
    <property type="match status" value="1"/>
</dbReference>
<dbReference type="InterPro" id="IPR003683">
    <property type="entry name" value="Cyt_6/f_cplx_su5"/>
</dbReference>
<dbReference type="InterPro" id="IPR036099">
    <property type="entry name" value="Cyt_6/f_cplx_su5_sf"/>
</dbReference>
<dbReference type="NCBIfam" id="NF001907">
    <property type="entry name" value="PRK00665.1"/>
    <property type="match status" value="1"/>
</dbReference>
<dbReference type="Pfam" id="PF02529">
    <property type="entry name" value="PetG"/>
    <property type="match status" value="1"/>
</dbReference>
<dbReference type="PIRSF" id="PIRSF000034">
    <property type="entry name" value="Cyt_b6-f_V"/>
    <property type="match status" value="1"/>
</dbReference>
<dbReference type="SUPFAM" id="SSF103446">
    <property type="entry name" value="PetG subunit of the cytochrome b6f complex"/>
    <property type="match status" value="1"/>
</dbReference>
<accession>B1XNK6</accession>
<reference key="1">
    <citation type="submission" date="2008-02" db="EMBL/GenBank/DDBJ databases">
        <title>Complete sequence of Synechococcus sp. PCC 7002.</title>
        <authorList>
            <person name="Li T."/>
            <person name="Zhao J."/>
            <person name="Zhao C."/>
            <person name="Liu Z."/>
            <person name="Zhao F."/>
            <person name="Marquardt J."/>
            <person name="Nomura C.T."/>
            <person name="Persson S."/>
            <person name="Detter J.C."/>
            <person name="Richardson P.M."/>
            <person name="Lanz C."/>
            <person name="Schuster S.C."/>
            <person name="Wang J."/>
            <person name="Li S."/>
            <person name="Huang X."/>
            <person name="Cai T."/>
            <person name="Yu Z."/>
            <person name="Luo J."/>
            <person name="Zhao J."/>
            <person name="Bryant D.A."/>
        </authorList>
    </citation>
    <scope>NUCLEOTIDE SEQUENCE [LARGE SCALE GENOMIC DNA]</scope>
    <source>
        <strain>ATCC 27264 / PCC 7002 / PR-6</strain>
    </source>
</reference>